<feature type="chain" id="PRO_0000330062" description="Mitochondrial inner membrane protease ATP23">
    <location>
        <begin position="1"/>
        <end position="236"/>
    </location>
</feature>
<feature type="active site" evidence="2">
    <location>
        <position position="137"/>
    </location>
</feature>
<feature type="binding site" evidence="1">
    <location>
        <position position="136"/>
    </location>
    <ligand>
        <name>a divalent metal cation</name>
        <dbReference type="ChEBI" id="CHEBI:60240"/>
        <note>catalytic</note>
    </ligand>
</feature>
<feature type="binding site" evidence="1">
    <location>
        <position position="140"/>
    </location>
    <ligand>
        <name>a divalent metal cation</name>
        <dbReference type="ChEBI" id="CHEBI:60240"/>
        <note>catalytic</note>
    </ligand>
</feature>
<name>ATP23_DEBHA</name>
<keyword id="KW-0378">Hydrolase</keyword>
<keyword id="KW-0472">Membrane</keyword>
<keyword id="KW-0479">Metal-binding</keyword>
<keyword id="KW-0482">Metalloprotease</keyword>
<keyword id="KW-0496">Mitochondrion</keyword>
<keyword id="KW-0999">Mitochondrion inner membrane</keyword>
<keyword id="KW-0645">Protease</keyword>
<keyword id="KW-1185">Reference proteome</keyword>
<accession>Q6BK77</accession>
<protein>
    <recommendedName>
        <fullName>Mitochondrial inner membrane protease ATP23</fullName>
        <ecNumber>3.4.24.-</ecNumber>
    </recommendedName>
</protein>
<dbReference type="EC" id="3.4.24.-"/>
<dbReference type="EMBL" id="CR382138">
    <property type="protein sequence ID" value="CAG89801.1"/>
    <property type="molecule type" value="Genomic_DNA"/>
</dbReference>
<dbReference type="RefSeq" id="XP_461394.1">
    <property type="nucleotide sequence ID" value="XM_461394.1"/>
</dbReference>
<dbReference type="FunCoup" id="Q6BK77">
    <property type="interactions" value="507"/>
</dbReference>
<dbReference type="STRING" id="284592.Q6BK77"/>
<dbReference type="MEROPS" id="M76.002"/>
<dbReference type="GeneID" id="2903044"/>
<dbReference type="KEGG" id="dha:DEHA2F24200g"/>
<dbReference type="VEuPathDB" id="FungiDB:DEHA2F24200g"/>
<dbReference type="eggNOG" id="KOG3314">
    <property type="taxonomic scope" value="Eukaryota"/>
</dbReference>
<dbReference type="HOGENOM" id="CLU_079125_0_0_1"/>
<dbReference type="InParanoid" id="Q6BK77"/>
<dbReference type="OMA" id="EAHQNCV"/>
<dbReference type="OrthoDB" id="285308at2759"/>
<dbReference type="Proteomes" id="UP000000599">
    <property type="component" value="Chromosome F"/>
</dbReference>
<dbReference type="GO" id="GO:0005743">
    <property type="term" value="C:mitochondrial inner membrane"/>
    <property type="evidence" value="ECO:0007669"/>
    <property type="project" value="UniProtKB-SubCell"/>
</dbReference>
<dbReference type="GO" id="GO:0046872">
    <property type="term" value="F:metal ion binding"/>
    <property type="evidence" value="ECO:0007669"/>
    <property type="project" value="UniProtKB-KW"/>
</dbReference>
<dbReference type="GO" id="GO:0004222">
    <property type="term" value="F:metalloendopeptidase activity"/>
    <property type="evidence" value="ECO:0007669"/>
    <property type="project" value="InterPro"/>
</dbReference>
<dbReference type="GO" id="GO:0034982">
    <property type="term" value="P:mitochondrial protein processing"/>
    <property type="evidence" value="ECO:0007669"/>
    <property type="project" value="TreeGrafter"/>
</dbReference>
<dbReference type="GO" id="GO:0033615">
    <property type="term" value="P:mitochondrial proton-transporting ATP synthase complex assembly"/>
    <property type="evidence" value="ECO:0007669"/>
    <property type="project" value="TreeGrafter"/>
</dbReference>
<dbReference type="InterPro" id="IPR019165">
    <property type="entry name" value="Peptidase_M76_ATP23"/>
</dbReference>
<dbReference type="PANTHER" id="PTHR21711">
    <property type="entry name" value="MITOCHONDRIAL INNER MEMBRANE PROTEASE"/>
    <property type="match status" value="1"/>
</dbReference>
<dbReference type="PANTHER" id="PTHR21711:SF0">
    <property type="entry name" value="MITOCHONDRIAL INNER MEMBRANE PROTEASE ATP23 HOMOLOG"/>
    <property type="match status" value="1"/>
</dbReference>
<dbReference type="Pfam" id="PF09768">
    <property type="entry name" value="Peptidase_M76"/>
    <property type="match status" value="1"/>
</dbReference>
<dbReference type="PROSITE" id="PS00142">
    <property type="entry name" value="ZINC_PROTEASE"/>
    <property type="match status" value="1"/>
</dbReference>
<sequence>MSDLTDAPQANTDTLTTSAPDKLSGFEWWRRSLQYRTGMGISEDEKKQFEHDYRAKSLPKQCTDCVANLDWMLNYSPSVIFMMDHVKKIGGNISKSNIICDVCDDYKGGGFHPEGGILLCSNWITDKWQLEDILTHELVHAYDFLKFKVDLTNLKHHACTEIRASMLSGECRIFNEIKKTGLGDFGKKFQSCIKRRAILSVSANPNCKDTQEAEKVVNTVWQSCFNDTRPFERVYR</sequence>
<proteinExistence type="inferred from homology"/>
<evidence type="ECO:0000250" key="1"/>
<evidence type="ECO:0000255" key="2">
    <source>
        <dbReference type="PROSITE-ProRule" id="PRU10095"/>
    </source>
</evidence>
<evidence type="ECO:0000305" key="3"/>
<reference key="1">
    <citation type="journal article" date="2004" name="Nature">
        <title>Genome evolution in yeasts.</title>
        <authorList>
            <person name="Dujon B."/>
            <person name="Sherman D."/>
            <person name="Fischer G."/>
            <person name="Durrens P."/>
            <person name="Casaregola S."/>
            <person name="Lafontaine I."/>
            <person name="de Montigny J."/>
            <person name="Marck C."/>
            <person name="Neuveglise C."/>
            <person name="Talla E."/>
            <person name="Goffard N."/>
            <person name="Frangeul L."/>
            <person name="Aigle M."/>
            <person name="Anthouard V."/>
            <person name="Babour A."/>
            <person name="Barbe V."/>
            <person name="Barnay S."/>
            <person name="Blanchin S."/>
            <person name="Beckerich J.-M."/>
            <person name="Beyne E."/>
            <person name="Bleykasten C."/>
            <person name="Boisrame A."/>
            <person name="Boyer J."/>
            <person name="Cattolico L."/>
            <person name="Confanioleri F."/>
            <person name="de Daruvar A."/>
            <person name="Despons L."/>
            <person name="Fabre E."/>
            <person name="Fairhead C."/>
            <person name="Ferry-Dumazet H."/>
            <person name="Groppi A."/>
            <person name="Hantraye F."/>
            <person name="Hennequin C."/>
            <person name="Jauniaux N."/>
            <person name="Joyet P."/>
            <person name="Kachouri R."/>
            <person name="Kerrest A."/>
            <person name="Koszul R."/>
            <person name="Lemaire M."/>
            <person name="Lesur I."/>
            <person name="Ma L."/>
            <person name="Muller H."/>
            <person name="Nicaud J.-M."/>
            <person name="Nikolski M."/>
            <person name="Oztas S."/>
            <person name="Ozier-Kalogeropoulos O."/>
            <person name="Pellenz S."/>
            <person name="Potier S."/>
            <person name="Richard G.-F."/>
            <person name="Straub M.-L."/>
            <person name="Suleau A."/>
            <person name="Swennen D."/>
            <person name="Tekaia F."/>
            <person name="Wesolowski-Louvel M."/>
            <person name="Westhof E."/>
            <person name="Wirth B."/>
            <person name="Zeniou-Meyer M."/>
            <person name="Zivanovic Y."/>
            <person name="Bolotin-Fukuhara M."/>
            <person name="Thierry A."/>
            <person name="Bouchier C."/>
            <person name="Caudron B."/>
            <person name="Scarpelli C."/>
            <person name="Gaillardin C."/>
            <person name="Weissenbach J."/>
            <person name="Wincker P."/>
            <person name="Souciet J.-L."/>
        </authorList>
    </citation>
    <scope>NUCLEOTIDE SEQUENCE [LARGE SCALE GENOMIC DNA]</scope>
    <source>
        <strain>ATCC 36239 / CBS 767 / BCRC 21394 / JCM 1990 / NBRC 0083 / IGC 2968</strain>
    </source>
</reference>
<comment type="function">
    <text evidence="1">Has a dual role in the assembly of mitochondrial ATPase. Acts as a protease that removes N-terminal residues of mitochondrial ATPase CF(0) subunit 6 at the intermembrane space side. Also involved in the correct assembly of the membrane-embedded ATPase CF(0) particle, probably mediating association of subunit 6 with the subunit 9 ring (By similarity).</text>
</comment>
<comment type="subcellular location">
    <subcellularLocation>
        <location>Mitochondrion inner membrane</location>
        <topology>Peripheral membrane protein</topology>
        <orientation>Intermembrane side</orientation>
    </subcellularLocation>
    <text evidence="1">Associates loosely with the inner membrane.</text>
</comment>
<comment type="similarity">
    <text evidence="3">Belongs to the peptidase M76 family.</text>
</comment>
<gene>
    <name type="primary">ATP23</name>
    <name type="ordered locus">DEHA2F24200g</name>
</gene>
<organism>
    <name type="scientific">Debaryomyces hansenii (strain ATCC 36239 / CBS 767 / BCRC 21394 / JCM 1990 / NBRC 0083 / IGC 2968)</name>
    <name type="common">Yeast</name>
    <name type="synonym">Torulaspora hansenii</name>
    <dbReference type="NCBI Taxonomy" id="284592"/>
    <lineage>
        <taxon>Eukaryota</taxon>
        <taxon>Fungi</taxon>
        <taxon>Dikarya</taxon>
        <taxon>Ascomycota</taxon>
        <taxon>Saccharomycotina</taxon>
        <taxon>Pichiomycetes</taxon>
        <taxon>Debaryomycetaceae</taxon>
        <taxon>Debaryomyces</taxon>
    </lineage>
</organism>